<organism>
    <name type="scientific">Listeria monocytogenes serotype 4b (strain F2365)</name>
    <dbReference type="NCBI Taxonomy" id="265669"/>
    <lineage>
        <taxon>Bacteria</taxon>
        <taxon>Bacillati</taxon>
        <taxon>Bacillota</taxon>
        <taxon>Bacilli</taxon>
        <taxon>Bacillales</taxon>
        <taxon>Listeriaceae</taxon>
        <taxon>Listeria</taxon>
    </lineage>
</organism>
<comment type="function">
    <text evidence="1">Catalyzes the reversible cyclization of carbamoyl aspartate to dihydroorotate.</text>
</comment>
<comment type="catalytic activity">
    <reaction evidence="1">
        <text>(S)-dihydroorotate + H2O = N-carbamoyl-L-aspartate + H(+)</text>
        <dbReference type="Rhea" id="RHEA:24296"/>
        <dbReference type="ChEBI" id="CHEBI:15377"/>
        <dbReference type="ChEBI" id="CHEBI:15378"/>
        <dbReference type="ChEBI" id="CHEBI:30864"/>
        <dbReference type="ChEBI" id="CHEBI:32814"/>
        <dbReference type="EC" id="3.5.2.3"/>
    </reaction>
</comment>
<comment type="cofactor">
    <cofactor evidence="1">
        <name>Zn(2+)</name>
        <dbReference type="ChEBI" id="CHEBI:29105"/>
    </cofactor>
    <text evidence="1">Binds 2 Zn(2+) ions per subunit.</text>
</comment>
<comment type="pathway">
    <text evidence="1">Pyrimidine metabolism; UMP biosynthesis via de novo pathway; (S)-dihydroorotate from bicarbonate: step 3/3.</text>
</comment>
<comment type="similarity">
    <text evidence="1">Belongs to the metallo-dependent hydrolases superfamily. DHOase family. Class I DHOase subfamily.</text>
</comment>
<sequence length="426" mass="46129">MYVLKNGQVLNASGELENKDVLIQNGKVNLIADSIEVTSGEEFDATGKLIAPGFIDVHVHLREPGGEHKETILTGTQAAARGGYTTICSMPNTKPVPDSKEVMESLQAKIKETAKVRVLPYASITTSLGTDELVDFEALKEAGAFAFTDDGVGVQLAGTMYEAMKRAAALDMAIVAHCEDNSLIYGGVVHDGIFAEKEGLKGIPNIAESVQIARDVLLAEAAGCHYHVCHISTKESVRVVRDAKRAGIRVTAEVSPHHLILDEEAIPGNDGNWKMNPPLRSKEDRAALLEGLLDGTIDFIATDHAPHAAEEKNVPMEQAAFGIVGLETAFPLLYTHFVKTNEWTLKQLIDWMTVKPAECFKLPYGKLEEGSVADIVVLDLEKEANIDPATFYSKGKNTPFVGETCIGWPVATFSEGTLVYNEGEIK</sequence>
<evidence type="ECO:0000255" key="1">
    <source>
        <dbReference type="HAMAP-Rule" id="MF_00220"/>
    </source>
</evidence>
<reference key="1">
    <citation type="journal article" date="2004" name="Nucleic Acids Res.">
        <title>Whole genome comparisons of serotype 4b and 1/2a strains of the food-borne pathogen Listeria monocytogenes reveal new insights into the core genome components of this species.</title>
        <authorList>
            <person name="Nelson K.E."/>
            <person name="Fouts D.E."/>
            <person name="Mongodin E.F."/>
            <person name="Ravel J."/>
            <person name="DeBoy R.T."/>
            <person name="Kolonay J.F."/>
            <person name="Rasko D.A."/>
            <person name="Angiuoli S.V."/>
            <person name="Gill S.R."/>
            <person name="Paulsen I.T."/>
            <person name="Peterson J.D."/>
            <person name="White O."/>
            <person name="Nelson W.C."/>
            <person name="Nierman W.C."/>
            <person name="Beanan M.J."/>
            <person name="Brinkac L.M."/>
            <person name="Daugherty S.C."/>
            <person name="Dodson R.J."/>
            <person name="Durkin A.S."/>
            <person name="Madupu R."/>
            <person name="Haft D.H."/>
            <person name="Selengut J."/>
            <person name="Van Aken S.E."/>
            <person name="Khouri H.M."/>
            <person name="Fedorova N."/>
            <person name="Forberger H.A."/>
            <person name="Tran B."/>
            <person name="Kathariou S."/>
            <person name="Wonderling L.D."/>
            <person name="Uhlich G.A."/>
            <person name="Bayles D.O."/>
            <person name="Luchansky J.B."/>
            <person name="Fraser C.M."/>
        </authorList>
    </citation>
    <scope>NUCLEOTIDE SEQUENCE [LARGE SCALE GENOMIC DNA]</scope>
    <source>
        <strain>F2365</strain>
    </source>
</reference>
<name>PYRC_LISMF</name>
<keyword id="KW-0378">Hydrolase</keyword>
<keyword id="KW-0479">Metal-binding</keyword>
<keyword id="KW-0665">Pyrimidine biosynthesis</keyword>
<keyword id="KW-0862">Zinc</keyword>
<dbReference type="EC" id="3.5.2.3" evidence="1"/>
<dbReference type="EMBL" id="AE017262">
    <property type="protein sequence ID" value="AAT04635.1"/>
    <property type="molecule type" value="Genomic_DNA"/>
</dbReference>
<dbReference type="RefSeq" id="WP_003725669.1">
    <property type="nucleotide sequence ID" value="NC_002973.6"/>
</dbReference>
<dbReference type="SMR" id="Q71YH9"/>
<dbReference type="KEGG" id="lmf:LMOf2365_1865"/>
<dbReference type="HOGENOM" id="CLU_015572_1_0_9"/>
<dbReference type="UniPathway" id="UPA00070">
    <property type="reaction ID" value="UER00117"/>
</dbReference>
<dbReference type="GO" id="GO:0005737">
    <property type="term" value="C:cytoplasm"/>
    <property type="evidence" value="ECO:0007669"/>
    <property type="project" value="TreeGrafter"/>
</dbReference>
<dbReference type="GO" id="GO:0004038">
    <property type="term" value="F:allantoinase activity"/>
    <property type="evidence" value="ECO:0007669"/>
    <property type="project" value="TreeGrafter"/>
</dbReference>
<dbReference type="GO" id="GO:0004151">
    <property type="term" value="F:dihydroorotase activity"/>
    <property type="evidence" value="ECO:0007669"/>
    <property type="project" value="UniProtKB-UniRule"/>
</dbReference>
<dbReference type="GO" id="GO:0008270">
    <property type="term" value="F:zinc ion binding"/>
    <property type="evidence" value="ECO:0007669"/>
    <property type="project" value="UniProtKB-UniRule"/>
</dbReference>
<dbReference type="GO" id="GO:0044205">
    <property type="term" value="P:'de novo' UMP biosynthetic process"/>
    <property type="evidence" value="ECO:0007669"/>
    <property type="project" value="UniProtKB-UniRule"/>
</dbReference>
<dbReference type="GO" id="GO:0006145">
    <property type="term" value="P:purine nucleobase catabolic process"/>
    <property type="evidence" value="ECO:0007669"/>
    <property type="project" value="TreeGrafter"/>
</dbReference>
<dbReference type="CDD" id="cd01317">
    <property type="entry name" value="DHOase_IIa"/>
    <property type="match status" value="1"/>
</dbReference>
<dbReference type="Gene3D" id="3.20.20.140">
    <property type="entry name" value="Metal-dependent hydrolases"/>
    <property type="match status" value="1"/>
</dbReference>
<dbReference type="Gene3D" id="2.30.40.10">
    <property type="entry name" value="Urease, subunit C, domain 1"/>
    <property type="match status" value="1"/>
</dbReference>
<dbReference type="HAMAP" id="MF_00220_B">
    <property type="entry name" value="PyrC_classI_B"/>
    <property type="match status" value="1"/>
</dbReference>
<dbReference type="InterPro" id="IPR006680">
    <property type="entry name" value="Amidohydro-rel"/>
</dbReference>
<dbReference type="InterPro" id="IPR004722">
    <property type="entry name" value="DHOase"/>
</dbReference>
<dbReference type="InterPro" id="IPR050138">
    <property type="entry name" value="DHOase/Allantoinase_Hydrolase"/>
</dbReference>
<dbReference type="InterPro" id="IPR002195">
    <property type="entry name" value="Dihydroorotase_CS"/>
</dbReference>
<dbReference type="InterPro" id="IPR011059">
    <property type="entry name" value="Metal-dep_hydrolase_composite"/>
</dbReference>
<dbReference type="InterPro" id="IPR032466">
    <property type="entry name" value="Metal_Hydrolase"/>
</dbReference>
<dbReference type="NCBIfam" id="NF006837">
    <property type="entry name" value="PRK09357.1-2"/>
    <property type="match status" value="1"/>
</dbReference>
<dbReference type="NCBIfam" id="TIGR00857">
    <property type="entry name" value="pyrC_multi"/>
    <property type="match status" value="1"/>
</dbReference>
<dbReference type="PANTHER" id="PTHR43668">
    <property type="entry name" value="ALLANTOINASE"/>
    <property type="match status" value="1"/>
</dbReference>
<dbReference type="PANTHER" id="PTHR43668:SF2">
    <property type="entry name" value="ALLANTOINASE"/>
    <property type="match status" value="1"/>
</dbReference>
<dbReference type="Pfam" id="PF01979">
    <property type="entry name" value="Amidohydro_1"/>
    <property type="match status" value="1"/>
</dbReference>
<dbReference type="SUPFAM" id="SSF51338">
    <property type="entry name" value="Composite domain of metallo-dependent hydrolases"/>
    <property type="match status" value="1"/>
</dbReference>
<dbReference type="SUPFAM" id="SSF51556">
    <property type="entry name" value="Metallo-dependent hydrolases"/>
    <property type="match status" value="1"/>
</dbReference>
<dbReference type="PROSITE" id="PS00482">
    <property type="entry name" value="DIHYDROOROTASE_1"/>
    <property type="match status" value="1"/>
</dbReference>
<dbReference type="PROSITE" id="PS00483">
    <property type="entry name" value="DIHYDROOROTASE_2"/>
    <property type="match status" value="1"/>
</dbReference>
<accession>Q71YH9</accession>
<gene>
    <name evidence="1" type="primary">pyrC</name>
    <name type="ordered locus">LMOf2365_1865</name>
</gene>
<feature type="chain" id="PRO_0000147240" description="Dihydroorotase">
    <location>
        <begin position="1"/>
        <end position="426"/>
    </location>
</feature>
<feature type="active site" evidence="1">
    <location>
        <position position="303"/>
    </location>
</feature>
<feature type="binding site" evidence="1">
    <location>
        <position position="58"/>
    </location>
    <ligand>
        <name>Zn(2+)</name>
        <dbReference type="ChEBI" id="CHEBI:29105"/>
        <label>1</label>
    </ligand>
</feature>
<feature type="binding site" evidence="1">
    <location>
        <begin position="60"/>
        <end position="62"/>
    </location>
    <ligand>
        <name>substrate</name>
    </ligand>
</feature>
<feature type="binding site" evidence="1">
    <location>
        <position position="60"/>
    </location>
    <ligand>
        <name>Zn(2+)</name>
        <dbReference type="ChEBI" id="CHEBI:29105"/>
        <label>1</label>
    </ligand>
</feature>
<feature type="binding site" evidence="1">
    <location>
        <position position="92"/>
    </location>
    <ligand>
        <name>substrate</name>
    </ligand>
</feature>
<feature type="binding site" evidence="1">
    <location>
        <position position="150"/>
    </location>
    <ligand>
        <name>Zn(2+)</name>
        <dbReference type="ChEBI" id="CHEBI:29105"/>
        <label>1</label>
    </ligand>
</feature>
<feature type="binding site" evidence="1">
    <location>
        <position position="150"/>
    </location>
    <ligand>
        <name>Zn(2+)</name>
        <dbReference type="ChEBI" id="CHEBI:29105"/>
        <label>2</label>
    </ligand>
</feature>
<feature type="binding site" evidence="1">
    <location>
        <position position="177"/>
    </location>
    <ligand>
        <name>Zn(2+)</name>
        <dbReference type="ChEBI" id="CHEBI:29105"/>
        <label>2</label>
    </ligand>
</feature>
<feature type="binding site" evidence="1">
    <location>
        <position position="230"/>
    </location>
    <ligand>
        <name>Zn(2+)</name>
        <dbReference type="ChEBI" id="CHEBI:29105"/>
        <label>2</label>
    </ligand>
</feature>
<feature type="binding site" evidence="1">
    <location>
        <position position="276"/>
    </location>
    <ligand>
        <name>substrate</name>
    </ligand>
</feature>
<feature type="binding site" evidence="1">
    <location>
        <position position="303"/>
    </location>
    <ligand>
        <name>Zn(2+)</name>
        <dbReference type="ChEBI" id="CHEBI:29105"/>
        <label>1</label>
    </ligand>
</feature>
<feature type="binding site" evidence="1">
    <location>
        <position position="307"/>
    </location>
    <ligand>
        <name>substrate</name>
    </ligand>
</feature>
<feature type="binding site" evidence="1">
    <location>
        <begin position="321"/>
        <end position="322"/>
    </location>
    <ligand>
        <name>substrate</name>
    </ligand>
</feature>
<protein>
    <recommendedName>
        <fullName evidence="1">Dihydroorotase</fullName>
        <shortName evidence="1">DHOase</shortName>
        <ecNumber evidence="1">3.5.2.3</ecNumber>
    </recommendedName>
</protein>
<proteinExistence type="inferred from homology"/>